<evidence type="ECO:0000255" key="1">
    <source>
        <dbReference type="HAMAP-Rule" id="MF_00274"/>
    </source>
</evidence>
<evidence type="ECO:0000256" key="2">
    <source>
        <dbReference type="SAM" id="MobiDB-lite"/>
    </source>
</evidence>
<protein>
    <recommendedName>
        <fullName evidence="1">Nucleoid-associated protein Pput_1600</fullName>
    </recommendedName>
</protein>
<name>Y1600_PSEP1</name>
<proteinExistence type="inferred from homology"/>
<sequence>MMKGGMAGLMKQAQQMQEKMQKMQEELANAEVTGQSGGGLVSVVMTGRHDVKRVSIDQSLMSTDEDDKEVLEDLIAAALNDAVRKVEQSSQEKMGGMTAGMQLPPGFKMPF</sequence>
<accession>A5W0U6</accession>
<gene>
    <name type="ordered locus">Pput_1600</name>
</gene>
<keyword id="KW-0963">Cytoplasm</keyword>
<keyword id="KW-0238">DNA-binding</keyword>
<comment type="function">
    <text evidence="1">Binds to DNA and alters its conformation. May be involved in regulation of gene expression, nucleoid organization and DNA protection.</text>
</comment>
<comment type="subunit">
    <text evidence="1">Homodimer.</text>
</comment>
<comment type="subcellular location">
    <subcellularLocation>
        <location evidence="1">Cytoplasm</location>
        <location evidence="1">Nucleoid</location>
    </subcellularLocation>
</comment>
<comment type="similarity">
    <text evidence="1">Belongs to the YbaB/EbfC family.</text>
</comment>
<organism>
    <name type="scientific">Pseudomonas putida (strain ATCC 700007 / DSM 6899 / JCM 31910 / BCRC 17059 / LMG 24140 / F1)</name>
    <dbReference type="NCBI Taxonomy" id="351746"/>
    <lineage>
        <taxon>Bacteria</taxon>
        <taxon>Pseudomonadati</taxon>
        <taxon>Pseudomonadota</taxon>
        <taxon>Gammaproteobacteria</taxon>
        <taxon>Pseudomonadales</taxon>
        <taxon>Pseudomonadaceae</taxon>
        <taxon>Pseudomonas</taxon>
    </lineage>
</organism>
<reference key="1">
    <citation type="submission" date="2007-05" db="EMBL/GenBank/DDBJ databases">
        <title>Complete sequence of Pseudomonas putida F1.</title>
        <authorList>
            <consortium name="US DOE Joint Genome Institute"/>
            <person name="Copeland A."/>
            <person name="Lucas S."/>
            <person name="Lapidus A."/>
            <person name="Barry K."/>
            <person name="Detter J.C."/>
            <person name="Glavina del Rio T."/>
            <person name="Hammon N."/>
            <person name="Israni S."/>
            <person name="Dalin E."/>
            <person name="Tice H."/>
            <person name="Pitluck S."/>
            <person name="Chain P."/>
            <person name="Malfatti S."/>
            <person name="Shin M."/>
            <person name="Vergez L."/>
            <person name="Schmutz J."/>
            <person name="Larimer F."/>
            <person name="Land M."/>
            <person name="Hauser L."/>
            <person name="Kyrpides N."/>
            <person name="Lykidis A."/>
            <person name="Parales R."/>
            <person name="Richardson P."/>
        </authorList>
    </citation>
    <scope>NUCLEOTIDE SEQUENCE [LARGE SCALE GENOMIC DNA]</scope>
    <source>
        <strain>ATCC 700007 / DSM 6899 / JCM 31910 / BCRC 17059 / LMG 24140 / F1</strain>
    </source>
</reference>
<feature type="chain" id="PRO_1000059204" description="Nucleoid-associated protein Pput_1600">
    <location>
        <begin position="1"/>
        <end position="111"/>
    </location>
</feature>
<feature type="region of interest" description="Disordered" evidence="2">
    <location>
        <begin position="1"/>
        <end position="25"/>
    </location>
</feature>
<feature type="region of interest" description="Disordered" evidence="2">
    <location>
        <begin position="87"/>
        <end position="111"/>
    </location>
</feature>
<dbReference type="EMBL" id="CP000712">
    <property type="protein sequence ID" value="ABQ77756.1"/>
    <property type="molecule type" value="Genomic_DNA"/>
</dbReference>
<dbReference type="SMR" id="A5W0U6"/>
<dbReference type="KEGG" id="ppf:Pput_1600"/>
<dbReference type="eggNOG" id="COG0718">
    <property type="taxonomic scope" value="Bacteria"/>
</dbReference>
<dbReference type="HOGENOM" id="CLU_140930_0_0_6"/>
<dbReference type="GO" id="GO:0043590">
    <property type="term" value="C:bacterial nucleoid"/>
    <property type="evidence" value="ECO:0007669"/>
    <property type="project" value="UniProtKB-UniRule"/>
</dbReference>
<dbReference type="GO" id="GO:0005829">
    <property type="term" value="C:cytosol"/>
    <property type="evidence" value="ECO:0007669"/>
    <property type="project" value="TreeGrafter"/>
</dbReference>
<dbReference type="GO" id="GO:0003677">
    <property type="term" value="F:DNA binding"/>
    <property type="evidence" value="ECO:0007669"/>
    <property type="project" value="UniProtKB-UniRule"/>
</dbReference>
<dbReference type="FunFam" id="3.30.1310.10:FF:000001">
    <property type="entry name" value="Nucleoid-associated protein YbaB"/>
    <property type="match status" value="1"/>
</dbReference>
<dbReference type="Gene3D" id="3.30.1310.10">
    <property type="entry name" value="Nucleoid-associated protein YbaB-like domain"/>
    <property type="match status" value="1"/>
</dbReference>
<dbReference type="HAMAP" id="MF_00274">
    <property type="entry name" value="DNA_YbaB_EbfC"/>
    <property type="match status" value="1"/>
</dbReference>
<dbReference type="InterPro" id="IPR036894">
    <property type="entry name" value="YbaB-like_sf"/>
</dbReference>
<dbReference type="InterPro" id="IPR004401">
    <property type="entry name" value="YbaB/EbfC"/>
</dbReference>
<dbReference type="NCBIfam" id="TIGR00103">
    <property type="entry name" value="DNA_YbaB_EbfC"/>
    <property type="match status" value="1"/>
</dbReference>
<dbReference type="PANTHER" id="PTHR33449">
    <property type="entry name" value="NUCLEOID-ASSOCIATED PROTEIN YBAB"/>
    <property type="match status" value="1"/>
</dbReference>
<dbReference type="PANTHER" id="PTHR33449:SF1">
    <property type="entry name" value="NUCLEOID-ASSOCIATED PROTEIN YBAB"/>
    <property type="match status" value="1"/>
</dbReference>
<dbReference type="Pfam" id="PF02575">
    <property type="entry name" value="YbaB_DNA_bd"/>
    <property type="match status" value="1"/>
</dbReference>
<dbReference type="PIRSF" id="PIRSF004555">
    <property type="entry name" value="UCP004555"/>
    <property type="match status" value="1"/>
</dbReference>
<dbReference type="SUPFAM" id="SSF82607">
    <property type="entry name" value="YbaB-like"/>
    <property type="match status" value="1"/>
</dbReference>